<reference evidence="5" key="1">
    <citation type="journal article" date="2012" name="Mol. Biosyst.">
        <title>De novo sequencing and characterization of a novel Bowman-Birk inhibitor from Lathyrus sativus L. seeds by electrospray mass spectrometry.</title>
        <authorList>
            <person name="Tamburino R."/>
            <person name="Severino V."/>
            <person name="Sandomenico A."/>
            <person name="Ruvo M."/>
            <person name="Parente A."/>
            <person name="Chambery A."/>
            <person name="Di Maro A."/>
        </authorList>
    </citation>
    <scope>PROTEIN SEQUENCE</scope>
    <scope>FUNCTION</scope>
    <scope>SUBUNIT</scope>
    <scope>MASS SPECTROMETRY</scope>
    <scope>IDENTIFICATION BY MASS SPECTROMETRY</scope>
    <source>
        <tissue evidence="4">Seed</tissue>
    </source>
</reference>
<proteinExistence type="evidence at protein level"/>
<accession>P86932</accession>
<comment type="function">
    <text evidence="3">Inhibits trypsin (IC(50)=0.9 nM) and alpha-chymotrypsin (IC(50)=1.1 nM).</text>
</comment>
<comment type="subunit">
    <text evidence="3">Dimer.</text>
</comment>
<comment type="mass spectrometry"/>
<comment type="similarity">
    <text evidence="2">Belongs to the Bowman-Birk serine protease inhibitor family.</text>
</comment>
<name>IBB2A_LATSA</name>
<evidence type="ECO:0000250" key="1">
    <source>
        <dbReference type="UniProtKB" id="P56679"/>
    </source>
</evidence>
<evidence type="ECO:0000255" key="2"/>
<evidence type="ECO:0000269" key="3">
    <source>
    </source>
</evidence>
<evidence type="ECO:0000303" key="4">
    <source>
    </source>
</evidence>
<evidence type="ECO:0000305" key="5"/>
<evidence type="ECO:0000305" key="6">
    <source>
    </source>
</evidence>
<organism>
    <name type="scientific">Lathyrus sativus</name>
    <name type="common">White vetchling</name>
    <dbReference type="NCBI Taxonomy" id="3860"/>
    <lineage>
        <taxon>Eukaryota</taxon>
        <taxon>Viridiplantae</taxon>
        <taxon>Streptophyta</taxon>
        <taxon>Embryophyta</taxon>
        <taxon>Tracheophyta</taxon>
        <taxon>Spermatophyta</taxon>
        <taxon>Magnoliopsida</taxon>
        <taxon>eudicotyledons</taxon>
        <taxon>Gunneridae</taxon>
        <taxon>Pentapetalae</taxon>
        <taxon>rosids</taxon>
        <taxon>fabids</taxon>
        <taxon>Fabales</taxon>
        <taxon>Fabaceae</taxon>
        <taxon>Papilionoideae</taxon>
        <taxon>50 kb inversion clade</taxon>
        <taxon>NPAAA clade</taxon>
        <taxon>Hologalegina</taxon>
        <taxon>IRL clade</taxon>
        <taxon>Fabeae</taxon>
        <taxon>Lathyrus</taxon>
    </lineage>
</organism>
<feature type="chain" id="PRO_0000438850" description="Bowman-Birk type proteinase inhibitor 2a" evidence="3">
    <location>
        <begin position="1"/>
        <end position="72"/>
    </location>
</feature>
<feature type="site" description="Reactive bond for trypsin" evidence="1">
    <location>
        <begin position="16"/>
        <end position="17"/>
    </location>
</feature>
<feature type="site" description="Reactive bond for chymotrypsin" evidence="1">
    <location>
        <begin position="42"/>
        <end position="43"/>
    </location>
</feature>
<feature type="disulfide bond" evidence="1">
    <location>
        <begin position="8"/>
        <end position="61"/>
    </location>
</feature>
<feature type="disulfide bond" evidence="1">
    <location>
        <begin position="9"/>
        <end position="24"/>
    </location>
</feature>
<feature type="disulfide bond" evidence="1">
    <location>
        <begin position="12"/>
        <end position="57"/>
    </location>
</feature>
<feature type="disulfide bond" evidence="1">
    <location>
        <begin position="14"/>
        <end position="22"/>
    </location>
</feature>
<feature type="disulfide bond" evidence="1">
    <location>
        <begin position="31"/>
        <end position="38"/>
    </location>
</feature>
<feature type="disulfide bond" evidence="1">
    <location>
        <begin position="35"/>
        <end position="50"/>
    </location>
</feature>
<feature type="disulfide bond" evidence="1">
    <location>
        <begin position="40"/>
        <end position="48"/>
    </location>
</feature>
<sequence>GDDVKSACCDTCLCTKSNPPTCRCVDVGETCHSACLSCICAYSYPPKCQCFDTQKFCYRACHNSEKEEVIKG</sequence>
<keyword id="KW-0903">Direct protein sequencing</keyword>
<keyword id="KW-1015">Disulfide bond</keyword>
<keyword id="KW-0646">Protease inhibitor</keyword>
<keyword id="KW-0722">Serine protease inhibitor</keyword>
<dbReference type="SMR" id="P86932"/>
<dbReference type="GO" id="GO:0005576">
    <property type="term" value="C:extracellular region"/>
    <property type="evidence" value="ECO:0007669"/>
    <property type="project" value="InterPro"/>
</dbReference>
<dbReference type="GO" id="GO:0004867">
    <property type="term" value="F:serine-type endopeptidase inhibitor activity"/>
    <property type="evidence" value="ECO:0000314"/>
    <property type="project" value="UniProtKB"/>
</dbReference>
<dbReference type="GO" id="GO:1900004">
    <property type="term" value="P:negative regulation of serine-type endopeptidase activity"/>
    <property type="evidence" value="ECO:0000314"/>
    <property type="project" value="UniProtKB"/>
</dbReference>
<dbReference type="CDD" id="cd00023">
    <property type="entry name" value="BBI"/>
    <property type="match status" value="1"/>
</dbReference>
<dbReference type="FunFam" id="2.10.69.10:FF:000001">
    <property type="entry name" value="Bowman-Birk type proteinase inhibitor"/>
    <property type="match status" value="1"/>
</dbReference>
<dbReference type="Gene3D" id="2.10.69.10">
    <property type="entry name" value="Cysteine Protease (Bromelain) Inhibitor, subunit H"/>
    <property type="match status" value="1"/>
</dbReference>
<dbReference type="InterPro" id="IPR035995">
    <property type="entry name" value="Bowman-Birk_prot_inh"/>
</dbReference>
<dbReference type="InterPro" id="IPR000877">
    <property type="entry name" value="Prot_inh_BBI"/>
</dbReference>
<dbReference type="Pfam" id="PF00228">
    <property type="entry name" value="Bowman-Birk_leg"/>
    <property type="match status" value="1"/>
</dbReference>
<dbReference type="SMART" id="SM00269">
    <property type="entry name" value="BowB"/>
    <property type="match status" value="1"/>
</dbReference>
<dbReference type="SUPFAM" id="SSF57247">
    <property type="entry name" value="Bowman-Birk inhibitor, BBI"/>
    <property type="match status" value="1"/>
</dbReference>
<protein>
    <recommendedName>
        <fullName evidence="6">Bowman-Birk type proteinase inhibitor 2a</fullName>
    </recommendedName>
    <alternativeName>
        <fullName evidence="4">LSI-2a</fullName>
    </alternativeName>
</protein>